<keyword id="KW-0067">ATP-binding</keyword>
<keyword id="KW-0119">Carbohydrate metabolism</keyword>
<keyword id="KW-0418">Kinase</keyword>
<keyword id="KW-0479">Metal-binding</keyword>
<keyword id="KW-0547">Nucleotide-binding</keyword>
<keyword id="KW-0808">Transferase</keyword>
<keyword id="KW-0862">Zinc</keyword>
<reference key="1">
    <citation type="journal article" date="2004" name="Nat. Genet.">
        <title>Comparison of genome degradation in Paratyphi A and Typhi, human-restricted serovars of Salmonella enterica that cause typhoid.</title>
        <authorList>
            <person name="McClelland M."/>
            <person name="Sanderson K.E."/>
            <person name="Clifton S.W."/>
            <person name="Latreille P."/>
            <person name="Porwollik S."/>
            <person name="Sabo A."/>
            <person name="Meyer R."/>
            <person name="Bieri T."/>
            <person name="Ozersky P."/>
            <person name="McLellan M."/>
            <person name="Harkins C.R."/>
            <person name="Wang C."/>
            <person name="Nguyen C."/>
            <person name="Berghoff A."/>
            <person name="Elliott G."/>
            <person name="Kohlberg S."/>
            <person name="Strong C."/>
            <person name="Du F."/>
            <person name="Carter J."/>
            <person name="Kremizki C."/>
            <person name="Layman D."/>
            <person name="Leonard S."/>
            <person name="Sun H."/>
            <person name="Fulton L."/>
            <person name="Nash W."/>
            <person name="Miner T."/>
            <person name="Minx P."/>
            <person name="Delehaunty K."/>
            <person name="Fronick C."/>
            <person name="Magrini V."/>
            <person name="Nhan M."/>
            <person name="Warren W."/>
            <person name="Florea L."/>
            <person name="Spieth J."/>
            <person name="Wilson R.K."/>
        </authorList>
    </citation>
    <scope>NUCLEOTIDE SEQUENCE [LARGE SCALE GENOMIC DNA]</scope>
    <source>
        <strain>ATCC 9150 / SARB42</strain>
    </source>
</reference>
<protein>
    <recommendedName>
        <fullName evidence="1">N-acetylmannosamine kinase</fullName>
        <ecNumber evidence="1">2.7.1.60</ecNumber>
    </recommendedName>
    <alternativeName>
        <fullName evidence="1">ManNAc kinase</fullName>
    </alternativeName>
    <alternativeName>
        <fullName evidence="1">N-acetyl-D-mannosamine kinase</fullName>
    </alternativeName>
</protein>
<name>NANK_SALPA</name>
<feature type="chain" id="PRO_0000301460" description="N-acetylmannosamine kinase">
    <location>
        <begin position="1"/>
        <end position="291"/>
    </location>
</feature>
<feature type="binding site" evidence="1">
    <location>
        <begin position="5"/>
        <end position="12"/>
    </location>
    <ligand>
        <name>ATP</name>
        <dbReference type="ChEBI" id="CHEBI:30616"/>
    </ligand>
</feature>
<feature type="binding site" evidence="1">
    <location>
        <begin position="132"/>
        <end position="139"/>
    </location>
    <ligand>
        <name>ATP</name>
        <dbReference type="ChEBI" id="CHEBI:30616"/>
    </ligand>
</feature>
<feature type="binding site" evidence="1">
    <location>
        <position position="156"/>
    </location>
    <ligand>
        <name>Zn(2+)</name>
        <dbReference type="ChEBI" id="CHEBI:29105"/>
    </ligand>
</feature>
<feature type="binding site" evidence="1">
    <location>
        <position position="166"/>
    </location>
    <ligand>
        <name>Zn(2+)</name>
        <dbReference type="ChEBI" id="CHEBI:29105"/>
    </ligand>
</feature>
<feature type="binding site" evidence="1">
    <location>
        <position position="168"/>
    </location>
    <ligand>
        <name>Zn(2+)</name>
        <dbReference type="ChEBI" id="CHEBI:29105"/>
    </ligand>
</feature>
<feature type="binding site" evidence="1">
    <location>
        <position position="173"/>
    </location>
    <ligand>
        <name>Zn(2+)</name>
        <dbReference type="ChEBI" id="CHEBI:29105"/>
    </ligand>
</feature>
<comment type="function">
    <text evidence="1">Catalyzes the phosphorylation of N-acetylmannosamine (ManNAc) to ManNAc-6-P.</text>
</comment>
<comment type="catalytic activity">
    <reaction evidence="1">
        <text>an N-acyl-D-mannosamine + ATP = an N-acyl-D-mannosamine 6-phosphate + ADP + H(+)</text>
        <dbReference type="Rhea" id="RHEA:23832"/>
        <dbReference type="ChEBI" id="CHEBI:15378"/>
        <dbReference type="ChEBI" id="CHEBI:16062"/>
        <dbReference type="ChEBI" id="CHEBI:30616"/>
        <dbReference type="ChEBI" id="CHEBI:57666"/>
        <dbReference type="ChEBI" id="CHEBI:456216"/>
        <dbReference type="EC" id="2.7.1.60"/>
    </reaction>
</comment>
<comment type="pathway">
    <text evidence="1">Amino-sugar metabolism; N-acetylneuraminate degradation; D-fructose 6-phosphate from N-acetylneuraminate: step 2/5.</text>
</comment>
<comment type="subunit">
    <text evidence="1">Homodimer.</text>
</comment>
<comment type="similarity">
    <text evidence="1">Belongs to the ROK (NagC/XylR) family. NanK subfamily.</text>
</comment>
<sequence length="291" mass="30078">MTTLAIDIGGTKLAAALIDNNLRISQRRELPTPASKTPDALREALKALVEPLRAEARQVAIASTGIIQEGMLLALNPHNLGGLLHFPLVQTLEAIAGLPTLAVNDAQAAAWAEYHALPDDIRDMVFITVSTGVGGGVVCDGKLLTGKGGLAGHLGHTLADPHGPVCGCGRVGCVEAIASGRGMAAAARDDLAGCDAKTLFIRAGEGHQQARHLVSQSAQVIARMIADVKATTDCQCVVIGGSVGLAEGYLEQVRAFLMQEPAPYHVALSAARYRHDAGLLGAALLAQGDTL</sequence>
<gene>
    <name evidence="1" type="primary">nanK</name>
    <name type="ordered locus">SPA3204</name>
</gene>
<evidence type="ECO:0000255" key="1">
    <source>
        <dbReference type="HAMAP-Rule" id="MF_01234"/>
    </source>
</evidence>
<dbReference type="EC" id="2.7.1.60" evidence="1"/>
<dbReference type="EMBL" id="CP000026">
    <property type="protein sequence ID" value="AAV79028.1"/>
    <property type="molecule type" value="Genomic_DNA"/>
</dbReference>
<dbReference type="RefSeq" id="WP_000208976.1">
    <property type="nucleotide sequence ID" value="NC_006511.1"/>
</dbReference>
<dbReference type="SMR" id="Q5PLF2"/>
<dbReference type="KEGG" id="spt:SPA3204"/>
<dbReference type="HOGENOM" id="CLU_036604_0_4_6"/>
<dbReference type="UniPathway" id="UPA00629">
    <property type="reaction ID" value="UER00681"/>
</dbReference>
<dbReference type="Proteomes" id="UP000008185">
    <property type="component" value="Chromosome"/>
</dbReference>
<dbReference type="GO" id="GO:0005524">
    <property type="term" value="F:ATP binding"/>
    <property type="evidence" value="ECO:0007669"/>
    <property type="project" value="UniProtKB-UniRule"/>
</dbReference>
<dbReference type="GO" id="GO:0009384">
    <property type="term" value="F:N-acylmannosamine kinase activity"/>
    <property type="evidence" value="ECO:0007669"/>
    <property type="project" value="UniProtKB-UniRule"/>
</dbReference>
<dbReference type="GO" id="GO:0008270">
    <property type="term" value="F:zinc ion binding"/>
    <property type="evidence" value="ECO:0007669"/>
    <property type="project" value="UniProtKB-UniRule"/>
</dbReference>
<dbReference type="GO" id="GO:0019262">
    <property type="term" value="P:N-acetylneuraminate catabolic process"/>
    <property type="evidence" value="ECO:0007669"/>
    <property type="project" value="UniProtKB-UniRule"/>
</dbReference>
<dbReference type="FunFam" id="3.30.420.40:FF:000062">
    <property type="entry name" value="N-acetylmannosamine kinase"/>
    <property type="match status" value="1"/>
</dbReference>
<dbReference type="FunFam" id="3.30.420.40:FF:000063">
    <property type="entry name" value="N-acetylmannosamine kinase"/>
    <property type="match status" value="1"/>
</dbReference>
<dbReference type="Gene3D" id="3.30.420.40">
    <property type="match status" value="2"/>
</dbReference>
<dbReference type="HAMAP" id="MF_01234">
    <property type="entry name" value="ManNAc_kinase"/>
    <property type="match status" value="1"/>
</dbReference>
<dbReference type="InterPro" id="IPR043129">
    <property type="entry name" value="ATPase_NBD"/>
</dbReference>
<dbReference type="InterPro" id="IPR023945">
    <property type="entry name" value="ManNAc_kinase_bac"/>
</dbReference>
<dbReference type="InterPro" id="IPR000600">
    <property type="entry name" value="ROK"/>
</dbReference>
<dbReference type="InterPro" id="IPR049874">
    <property type="entry name" value="ROK_cs"/>
</dbReference>
<dbReference type="NCBIfam" id="NF047821">
    <property type="entry name" value="NactlManKinNanK"/>
    <property type="match status" value="1"/>
</dbReference>
<dbReference type="NCBIfam" id="NF003461">
    <property type="entry name" value="PRK05082.1"/>
    <property type="match status" value="1"/>
</dbReference>
<dbReference type="PANTHER" id="PTHR18964:SF169">
    <property type="entry name" value="N-ACETYLMANNOSAMINE KINASE"/>
    <property type="match status" value="1"/>
</dbReference>
<dbReference type="PANTHER" id="PTHR18964">
    <property type="entry name" value="ROK (REPRESSOR, ORF, KINASE) FAMILY"/>
    <property type="match status" value="1"/>
</dbReference>
<dbReference type="Pfam" id="PF00480">
    <property type="entry name" value="ROK"/>
    <property type="match status" value="1"/>
</dbReference>
<dbReference type="SUPFAM" id="SSF53067">
    <property type="entry name" value="Actin-like ATPase domain"/>
    <property type="match status" value="1"/>
</dbReference>
<dbReference type="PROSITE" id="PS01125">
    <property type="entry name" value="ROK"/>
    <property type="match status" value="1"/>
</dbReference>
<accession>Q5PLF2</accession>
<proteinExistence type="inferred from homology"/>
<organism>
    <name type="scientific">Salmonella paratyphi A (strain ATCC 9150 / SARB42)</name>
    <dbReference type="NCBI Taxonomy" id="295319"/>
    <lineage>
        <taxon>Bacteria</taxon>
        <taxon>Pseudomonadati</taxon>
        <taxon>Pseudomonadota</taxon>
        <taxon>Gammaproteobacteria</taxon>
        <taxon>Enterobacterales</taxon>
        <taxon>Enterobacteriaceae</taxon>
        <taxon>Salmonella</taxon>
    </lineage>
</organism>